<sequence>MTARRGSAPHRIATISVLTSPLAQPGGGDAGGLNVYVVETARRFAETGVQVDIFTRAAAPRLPPIVELCDGVVVRHVPAGPPREVDKGALPRVLGEFTAGMLRAPGDYDVVHAHHWLSGRVGALVARSRGVPLVQSMHSLGLVKNAVLPGEDGSAPPAQIAGESAVIAAADRLVANTAQEADQLIALYGAAPERVHTVHPGVDLELFRPGDRDQARARLGLPHDAFVLLFAGRVQRLKGPDILMRAAAQLLHADLDLAQRLVVAFVGGPSGELQADPDQLTKLATDLGIGEQVRVEPPCPHPELADWYRAATLVVVPSRAETFGLVAVEAQACGTPVVAAAVGGLQTAVRAGVSGVLVEGHDPARYAEVIRALIDDPARLTALRAGALQHAAGFGWSEAVDRLLAVYRSAIEGGRGRP</sequence>
<evidence type="ECO:0000255" key="1">
    <source>
        <dbReference type="HAMAP-Rule" id="MF_01695"/>
    </source>
</evidence>
<proteinExistence type="inferred from homology"/>
<reference key="1">
    <citation type="journal article" date="2009" name="Stand. Genomic Sci.">
        <title>Complete genome sequence of Catenulispora acidiphila type strain (ID 139908).</title>
        <authorList>
            <person name="Copeland A."/>
            <person name="Lapidus A."/>
            <person name="Glavina Del Rio T."/>
            <person name="Nolan M."/>
            <person name="Lucas S."/>
            <person name="Chen F."/>
            <person name="Tice H."/>
            <person name="Cheng J.F."/>
            <person name="Bruce D."/>
            <person name="Goodwin L."/>
            <person name="Pitluck S."/>
            <person name="Mikhailova N."/>
            <person name="Pati A."/>
            <person name="Ivanova N."/>
            <person name="Mavromatis K."/>
            <person name="Chen A."/>
            <person name="Palaniappan K."/>
            <person name="Chain P."/>
            <person name="Land M."/>
            <person name="Hauser L."/>
            <person name="Chang Y.J."/>
            <person name="Jeffries C.D."/>
            <person name="Chertkov O."/>
            <person name="Brettin T."/>
            <person name="Detter J.C."/>
            <person name="Han C."/>
            <person name="Ali Z."/>
            <person name="Tindall B.J."/>
            <person name="Goker M."/>
            <person name="Bristow J."/>
            <person name="Eisen J.A."/>
            <person name="Markowitz V."/>
            <person name="Hugenholtz P."/>
            <person name="Kyrpides N.C."/>
            <person name="Klenk H.P."/>
        </authorList>
    </citation>
    <scope>NUCLEOTIDE SEQUENCE [LARGE SCALE GENOMIC DNA]</scope>
    <source>
        <strain>DSM 44928 / JCM 14897 / NBRC 102108 / NRRL B-24433 / ID139908</strain>
    </source>
</reference>
<gene>
    <name evidence="1" type="primary">mshA1</name>
    <name type="ordered locus">Caci_5074</name>
</gene>
<organism>
    <name type="scientific">Catenulispora acidiphila (strain DSM 44928 / JCM 14897 / NBRC 102108 / NRRL B-24433 / ID139908)</name>
    <dbReference type="NCBI Taxonomy" id="479433"/>
    <lineage>
        <taxon>Bacteria</taxon>
        <taxon>Bacillati</taxon>
        <taxon>Actinomycetota</taxon>
        <taxon>Actinomycetes</taxon>
        <taxon>Catenulisporales</taxon>
        <taxon>Catenulisporaceae</taxon>
        <taxon>Catenulispora</taxon>
    </lineage>
</organism>
<name>MSHA1_CATAD</name>
<protein>
    <recommendedName>
        <fullName>D-inositol 3-phosphate glycosyltransferase 1</fullName>
        <ecNumber evidence="1">2.4.1.250</ecNumber>
    </recommendedName>
    <alternativeName>
        <fullName evidence="1">N-acetylglucosamine-inositol-phosphate N-acetylglucosaminyltransferase 1</fullName>
        <shortName evidence="1">GlcNAc-Ins-P N-acetylglucosaminyltransferase 1</shortName>
    </alternativeName>
</protein>
<accession>C7Q4Y6</accession>
<feature type="chain" id="PRO_0000400112" description="D-inositol 3-phosphate glycosyltransferase 1">
    <location>
        <begin position="1"/>
        <end position="418"/>
    </location>
</feature>
<feature type="binding site" evidence="1">
    <location>
        <begin position="24"/>
        <end position="25"/>
    </location>
    <ligand>
        <name>UDP-N-acetyl-alpha-D-glucosamine</name>
        <dbReference type="ChEBI" id="CHEBI:57705"/>
    </ligand>
</feature>
<feature type="binding site" evidence="1">
    <location>
        <begin position="29"/>
        <end position="34"/>
    </location>
    <ligand>
        <name>1D-myo-inositol 3-phosphate</name>
        <dbReference type="ChEBI" id="CHEBI:58401"/>
    </ligand>
</feature>
<feature type="binding site" evidence="1">
    <location>
        <position position="32"/>
    </location>
    <ligand>
        <name>UDP-N-acetyl-alpha-D-glucosamine</name>
        <dbReference type="ChEBI" id="CHEBI:57705"/>
    </ligand>
</feature>
<feature type="binding site" evidence="1">
    <location>
        <position position="87"/>
    </location>
    <ligand>
        <name>1D-myo-inositol 3-phosphate</name>
        <dbReference type="ChEBI" id="CHEBI:58401"/>
    </ligand>
</feature>
<feature type="binding site" evidence="1">
    <location>
        <position position="115"/>
    </location>
    <ligand>
        <name>1D-myo-inositol 3-phosphate</name>
        <dbReference type="ChEBI" id="CHEBI:58401"/>
    </ligand>
</feature>
<feature type="binding site" evidence="1">
    <location>
        <position position="139"/>
    </location>
    <ligand>
        <name>1D-myo-inositol 3-phosphate</name>
        <dbReference type="ChEBI" id="CHEBI:58401"/>
    </ligand>
</feature>
<feature type="binding site" evidence="1">
    <location>
        <position position="159"/>
    </location>
    <ligand>
        <name>1D-myo-inositol 3-phosphate</name>
        <dbReference type="ChEBI" id="CHEBI:58401"/>
    </ligand>
</feature>
<feature type="binding site" evidence="1">
    <location>
        <position position="233"/>
    </location>
    <ligand>
        <name>UDP-N-acetyl-alpha-D-glucosamine</name>
        <dbReference type="ChEBI" id="CHEBI:57705"/>
    </ligand>
</feature>
<feature type="binding site" evidence="1">
    <location>
        <position position="238"/>
    </location>
    <ligand>
        <name>UDP-N-acetyl-alpha-D-glucosamine</name>
        <dbReference type="ChEBI" id="CHEBI:57705"/>
    </ligand>
</feature>
<feature type="binding site" evidence="1">
    <location>
        <position position="308"/>
    </location>
    <ligand>
        <name>Mg(2+)</name>
        <dbReference type="ChEBI" id="CHEBI:18420"/>
    </ligand>
</feature>
<feature type="binding site" evidence="1">
    <location>
        <position position="309"/>
    </location>
    <ligand>
        <name>Mg(2+)</name>
        <dbReference type="ChEBI" id="CHEBI:18420"/>
    </ligand>
</feature>
<feature type="binding site" evidence="1">
    <location>
        <position position="311"/>
    </location>
    <ligand>
        <name>Mg(2+)</name>
        <dbReference type="ChEBI" id="CHEBI:18420"/>
    </ligand>
</feature>
<feature type="binding site" evidence="1">
    <location>
        <position position="321"/>
    </location>
    <ligand>
        <name>UDP-N-acetyl-alpha-D-glucosamine</name>
        <dbReference type="ChEBI" id="CHEBI:57705"/>
    </ligand>
</feature>
<feature type="binding site" evidence="1">
    <location>
        <position position="329"/>
    </location>
    <ligand>
        <name>UDP-N-acetyl-alpha-D-glucosamine</name>
        <dbReference type="ChEBI" id="CHEBI:57705"/>
    </ligand>
</feature>
<feature type="binding site" evidence="1">
    <location>
        <position position="335"/>
    </location>
    <ligand>
        <name>Mg(2+)</name>
        <dbReference type="ChEBI" id="CHEBI:18420"/>
    </ligand>
</feature>
<keyword id="KW-0328">Glycosyltransferase</keyword>
<keyword id="KW-0460">Magnesium</keyword>
<keyword id="KW-0479">Metal-binding</keyword>
<keyword id="KW-1185">Reference proteome</keyword>
<keyword id="KW-0808">Transferase</keyword>
<comment type="function">
    <text evidence="1">Catalyzes the transfer of a N-acetyl-glucosamine moiety to 1D-myo-inositol 3-phosphate to produce 1D-myo-inositol 2-acetamido-2-deoxy-glucopyranoside 3-phosphate in the mycothiol biosynthesis pathway.</text>
</comment>
<comment type="catalytic activity">
    <reaction evidence="1">
        <text>1D-myo-inositol 3-phosphate + UDP-N-acetyl-alpha-D-glucosamine = 1D-myo-inositol 2-acetamido-2-deoxy-alpha-D-glucopyranoside 3-phosphate + UDP + H(+)</text>
        <dbReference type="Rhea" id="RHEA:26188"/>
        <dbReference type="ChEBI" id="CHEBI:15378"/>
        <dbReference type="ChEBI" id="CHEBI:57705"/>
        <dbReference type="ChEBI" id="CHEBI:58223"/>
        <dbReference type="ChEBI" id="CHEBI:58401"/>
        <dbReference type="ChEBI" id="CHEBI:58892"/>
        <dbReference type="EC" id="2.4.1.250"/>
    </reaction>
</comment>
<comment type="subunit">
    <text evidence="1">Homodimer.</text>
</comment>
<comment type="similarity">
    <text evidence="1">Belongs to the glycosyltransferase group 1 family. MshA subfamily.</text>
</comment>
<dbReference type="EC" id="2.4.1.250" evidence="1"/>
<dbReference type="EMBL" id="CP001700">
    <property type="protein sequence ID" value="ACU73934.1"/>
    <property type="molecule type" value="Genomic_DNA"/>
</dbReference>
<dbReference type="RefSeq" id="WP_015793663.1">
    <property type="nucleotide sequence ID" value="NC_013131.1"/>
</dbReference>
<dbReference type="SMR" id="C7Q4Y6"/>
<dbReference type="STRING" id="479433.Caci_5074"/>
<dbReference type="CAZy" id="GT4">
    <property type="family name" value="Glycosyltransferase Family 4"/>
</dbReference>
<dbReference type="KEGG" id="cai:Caci_5074"/>
<dbReference type="eggNOG" id="COG0297">
    <property type="taxonomic scope" value="Bacteria"/>
</dbReference>
<dbReference type="HOGENOM" id="CLU_009583_2_3_11"/>
<dbReference type="InParanoid" id="C7Q4Y6"/>
<dbReference type="OrthoDB" id="9810929at2"/>
<dbReference type="Proteomes" id="UP000000851">
    <property type="component" value="Chromosome"/>
</dbReference>
<dbReference type="GO" id="GO:0008375">
    <property type="term" value="F:acetylglucosaminyltransferase activity"/>
    <property type="evidence" value="ECO:0007669"/>
    <property type="project" value="UniProtKB-UniRule"/>
</dbReference>
<dbReference type="GO" id="GO:0102710">
    <property type="term" value="F:D-inositol-3-phosphate glycosyltransferase activity"/>
    <property type="evidence" value="ECO:0007669"/>
    <property type="project" value="UniProtKB-EC"/>
</dbReference>
<dbReference type="GO" id="GO:0000287">
    <property type="term" value="F:magnesium ion binding"/>
    <property type="evidence" value="ECO:0007669"/>
    <property type="project" value="UniProtKB-UniRule"/>
</dbReference>
<dbReference type="GO" id="GO:0010125">
    <property type="term" value="P:mycothiol biosynthetic process"/>
    <property type="evidence" value="ECO:0007669"/>
    <property type="project" value="UniProtKB-UniRule"/>
</dbReference>
<dbReference type="CDD" id="cd03800">
    <property type="entry name" value="GT4_sucrose_synthase"/>
    <property type="match status" value="1"/>
</dbReference>
<dbReference type="Gene3D" id="3.40.50.2000">
    <property type="entry name" value="Glycogen Phosphorylase B"/>
    <property type="match status" value="2"/>
</dbReference>
<dbReference type="HAMAP" id="MF_01695">
    <property type="entry name" value="MshA"/>
    <property type="match status" value="1"/>
</dbReference>
<dbReference type="InterPro" id="IPR001296">
    <property type="entry name" value="Glyco_trans_1"/>
</dbReference>
<dbReference type="InterPro" id="IPR028098">
    <property type="entry name" value="Glyco_trans_4-like_N"/>
</dbReference>
<dbReference type="InterPro" id="IPR050194">
    <property type="entry name" value="Glycosyltransferase_grp1"/>
</dbReference>
<dbReference type="InterPro" id="IPR017814">
    <property type="entry name" value="Mycothiol_biosynthesis_MshA"/>
</dbReference>
<dbReference type="NCBIfam" id="TIGR03449">
    <property type="entry name" value="mycothiol_MshA"/>
    <property type="match status" value="1"/>
</dbReference>
<dbReference type="PANTHER" id="PTHR45947">
    <property type="entry name" value="SULFOQUINOVOSYL TRANSFERASE SQD2"/>
    <property type="match status" value="1"/>
</dbReference>
<dbReference type="PANTHER" id="PTHR45947:SF3">
    <property type="entry name" value="SULFOQUINOVOSYL TRANSFERASE SQD2"/>
    <property type="match status" value="1"/>
</dbReference>
<dbReference type="Pfam" id="PF13579">
    <property type="entry name" value="Glyco_trans_4_4"/>
    <property type="match status" value="1"/>
</dbReference>
<dbReference type="Pfam" id="PF00534">
    <property type="entry name" value="Glycos_transf_1"/>
    <property type="match status" value="1"/>
</dbReference>
<dbReference type="SUPFAM" id="SSF53756">
    <property type="entry name" value="UDP-Glycosyltransferase/glycogen phosphorylase"/>
    <property type="match status" value="1"/>
</dbReference>